<keyword id="KW-0378">Hydrolase</keyword>
<keyword id="KW-0719">Serine esterase</keyword>
<name>FRSA_VIBC3</name>
<comment type="function">
    <text evidence="1">Catalyzes the hydrolysis of esters.</text>
</comment>
<comment type="catalytic activity">
    <reaction evidence="1">
        <text>a carboxylic ester + H2O = an alcohol + a carboxylate + H(+)</text>
        <dbReference type="Rhea" id="RHEA:21164"/>
        <dbReference type="ChEBI" id="CHEBI:15377"/>
        <dbReference type="ChEBI" id="CHEBI:15378"/>
        <dbReference type="ChEBI" id="CHEBI:29067"/>
        <dbReference type="ChEBI" id="CHEBI:30879"/>
        <dbReference type="ChEBI" id="CHEBI:33308"/>
        <dbReference type="EC" id="3.1.1.1"/>
    </reaction>
</comment>
<comment type="similarity">
    <text evidence="1">Belongs to the FrsA family.</text>
</comment>
<proteinExistence type="inferred from homology"/>
<protein>
    <recommendedName>
        <fullName evidence="1">Esterase FrsA</fullName>
        <ecNumber evidence="1">3.1.1.1</ecNumber>
    </recommendedName>
</protein>
<feature type="chain" id="PRO_1000073013" description="Esterase FrsA">
    <location>
        <begin position="1"/>
        <end position="415"/>
    </location>
</feature>
<accession>A5F605</accession>
<accession>C3M3N3</accession>
<dbReference type="EC" id="3.1.1.1" evidence="1"/>
<dbReference type="EMBL" id="CP000627">
    <property type="protein sequence ID" value="ABQ21910.1"/>
    <property type="molecule type" value="Genomic_DNA"/>
</dbReference>
<dbReference type="EMBL" id="CP001235">
    <property type="protein sequence ID" value="ACP10382.1"/>
    <property type="molecule type" value="Genomic_DNA"/>
</dbReference>
<dbReference type="RefSeq" id="WP_001287570.1">
    <property type="nucleotide sequence ID" value="NZ_JAACZH010000008.1"/>
</dbReference>
<dbReference type="SMR" id="A5F605"/>
<dbReference type="ESTHER" id="vibch-y2276">
    <property type="family name" value="Duf_1100-R"/>
</dbReference>
<dbReference type="GeneID" id="69719100"/>
<dbReference type="KEGG" id="vco:VC0395_A1866"/>
<dbReference type="KEGG" id="vcr:VC395_2392"/>
<dbReference type="PATRIC" id="fig|345073.21.peg.2306"/>
<dbReference type="eggNOG" id="COG1073">
    <property type="taxonomic scope" value="Bacteria"/>
</dbReference>
<dbReference type="HOGENOM" id="CLU_036819_0_0_6"/>
<dbReference type="OrthoDB" id="5590073at2"/>
<dbReference type="Proteomes" id="UP000000249">
    <property type="component" value="Chromosome 2"/>
</dbReference>
<dbReference type="GO" id="GO:0106435">
    <property type="term" value="F:carboxylesterase activity"/>
    <property type="evidence" value="ECO:0007669"/>
    <property type="project" value="UniProtKB-EC"/>
</dbReference>
<dbReference type="Gene3D" id="3.40.50.1820">
    <property type="entry name" value="alpha/beta hydrolase"/>
    <property type="match status" value="1"/>
</dbReference>
<dbReference type="HAMAP" id="MF_01063">
    <property type="entry name" value="FrsA"/>
    <property type="match status" value="1"/>
</dbReference>
<dbReference type="InterPro" id="IPR029058">
    <property type="entry name" value="AB_hydrolase_fold"/>
</dbReference>
<dbReference type="InterPro" id="IPR043423">
    <property type="entry name" value="FrsA"/>
</dbReference>
<dbReference type="InterPro" id="IPR010520">
    <property type="entry name" value="FrsA-like"/>
</dbReference>
<dbReference type="InterPro" id="IPR050261">
    <property type="entry name" value="FrsA_esterase"/>
</dbReference>
<dbReference type="NCBIfam" id="NF003460">
    <property type="entry name" value="PRK05077.1"/>
    <property type="match status" value="1"/>
</dbReference>
<dbReference type="PANTHER" id="PTHR22946">
    <property type="entry name" value="DIENELACTONE HYDROLASE DOMAIN-CONTAINING PROTEIN-RELATED"/>
    <property type="match status" value="1"/>
</dbReference>
<dbReference type="PANTHER" id="PTHR22946:SF4">
    <property type="entry name" value="ESTERASE FRSA"/>
    <property type="match status" value="1"/>
</dbReference>
<dbReference type="Pfam" id="PF06500">
    <property type="entry name" value="FrsA-like"/>
    <property type="match status" value="1"/>
</dbReference>
<dbReference type="SUPFAM" id="SSF53474">
    <property type="entry name" value="alpha/beta-Hydrolases"/>
    <property type="match status" value="1"/>
</dbReference>
<gene>
    <name evidence="1" type="primary">frsA</name>
    <name type="ordered locus">VC0395_A1866</name>
    <name type="ordered locus">VC395_2392</name>
</gene>
<sequence>MSEASSKNLSETLFQNHKQAKETSSLTQYMPSSLELLDTRREQSSQAWYRNLRRLQWIWQGVDPVEQEEILARIASSKHSRTHDEWLDTVMGYRSGNWTYEWTRVGMLHQKQAAERQGEEAADQMFAAALYYSIAGYPHLRNDNLALQAQVLANNAYQEAAKLTGFVVKRLEFSYQNKKIAGYLHLRNTDSPKPVVLVSAGLDSLQTDMWRLFRDYLAKRDIAMLTIDMPSLGASSHWPLTEDSSCLHQAVLNQLADLPWVDHFRIGLIGFRFGGNAMARLAFLESDKVKACVSLGAPIHDIFTSPNKLAAMPKMYLDVLASRLGKNVVDVRSLSGQLMAWSLKVQGFMSGRRTKTPILALGLEGDPVSPYSDNQLVALFSQGGQAKKVKSKTISQGYEQSLDLAINWLEDELCK</sequence>
<reference key="1">
    <citation type="submission" date="2007-03" db="EMBL/GenBank/DDBJ databases">
        <authorList>
            <person name="Heidelberg J."/>
        </authorList>
    </citation>
    <scope>NUCLEOTIDE SEQUENCE [LARGE SCALE GENOMIC DNA]</scope>
    <source>
        <strain>ATCC 39541 / Classical Ogawa 395 / O395</strain>
    </source>
</reference>
<reference key="2">
    <citation type="journal article" date="2008" name="PLoS ONE">
        <title>A recalibrated molecular clock and independent origins for the cholera pandemic clones.</title>
        <authorList>
            <person name="Feng L."/>
            <person name="Reeves P.R."/>
            <person name="Lan R."/>
            <person name="Ren Y."/>
            <person name="Gao C."/>
            <person name="Zhou Z."/>
            <person name="Ren Y."/>
            <person name="Cheng J."/>
            <person name="Wang W."/>
            <person name="Wang J."/>
            <person name="Qian W."/>
            <person name="Li D."/>
            <person name="Wang L."/>
        </authorList>
    </citation>
    <scope>NUCLEOTIDE SEQUENCE [LARGE SCALE GENOMIC DNA]</scope>
    <source>
        <strain>ATCC 39541 / Classical Ogawa 395 / O395</strain>
    </source>
</reference>
<evidence type="ECO:0000255" key="1">
    <source>
        <dbReference type="HAMAP-Rule" id="MF_01063"/>
    </source>
</evidence>
<organism>
    <name type="scientific">Vibrio cholerae serotype O1 (strain ATCC 39541 / Classical Ogawa 395 / O395)</name>
    <dbReference type="NCBI Taxonomy" id="345073"/>
    <lineage>
        <taxon>Bacteria</taxon>
        <taxon>Pseudomonadati</taxon>
        <taxon>Pseudomonadota</taxon>
        <taxon>Gammaproteobacteria</taxon>
        <taxon>Vibrionales</taxon>
        <taxon>Vibrionaceae</taxon>
        <taxon>Vibrio</taxon>
    </lineage>
</organism>